<proteinExistence type="inferred from homology"/>
<organism>
    <name type="scientific">Chlorobium phaeobacteroides (strain DSM 266 / SMG 266 / 2430)</name>
    <dbReference type="NCBI Taxonomy" id="290317"/>
    <lineage>
        <taxon>Bacteria</taxon>
        <taxon>Pseudomonadati</taxon>
        <taxon>Chlorobiota</taxon>
        <taxon>Chlorobiia</taxon>
        <taxon>Chlorobiales</taxon>
        <taxon>Chlorobiaceae</taxon>
        <taxon>Chlorobium/Pelodictyon group</taxon>
        <taxon>Chlorobium</taxon>
    </lineage>
</organism>
<dbReference type="EC" id="3.6.-.-" evidence="1"/>
<dbReference type="EMBL" id="CP000492">
    <property type="protein sequence ID" value="ABL64223.1"/>
    <property type="molecule type" value="Genomic_DNA"/>
</dbReference>
<dbReference type="RefSeq" id="WP_011744063.1">
    <property type="nucleotide sequence ID" value="NC_008639.1"/>
</dbReference>
<dbReference type="SMR" id="A1BCU6"/>
<dbReference type="STRING" id="290317.Cpha266_0153"/>
<dbReference type="KEGG" id="cph:Cpha266_0153"/>
<dbReference type="eggNOG" id="COG0486">
    <property type="taxonomic scope" value="Bacteria"/>
</dbReference>
<dbReference type="HOGENOM" id="CLU_019624_4_1_10"/>
<dbReference type="OrthoDB" id="9805918at2"/>
<dbReference type="Proteomes" id="UP000008701">
    <property type="component" value="Chromosome"/>
</dbReference>
<dbReference type="GO" id="GO:0005829">
    <property type="term" value="C:cytosol"/>
    <property type="evidence" value="ECO:0007669"/>
    <property type="project" value="TreeGrafter"/>
</dbReference>
<dbReference type="GO" id="GO:0005525">
    <property type="term" value="F:GTP binding"/>
    <property type="evidence" value="ECO:0007669"/>
    <property type="project" value="UniProtKB-UniRule"/>
</dbReference>
<dbReference type="GO" id="GO:0003924">
    <property type="term" value="F:GTPase activity"/>
    <property type="evidence" value="ECO:0007669"/>
    <property type="project" value="UniProtKB-UniRule"/>
</dbReference>
<dbReference type="GO" id="GO:0046872">
    <property type="term" value="F:metal ion binding"/>
    <property type="evidence" value="ECO:0007669"/>
    <property type="project" value="UniProtKB-KW"/>
</dbReference>
<dbReference type="GO" id="GO:0030488">
    <property type="term" value="P:tRNA methylation"/>
    <property type="evidence" value="ECO:0007669"/>
    <property type="project" value="TreeGrafter"/>
</dbReference>
<dbReference type="GO" id="GO:0002098">
    <property type="term" value="P:tRNA wobble uridine modification"/>
    <property type="evidence" value="ECO:0007669"/>
    <property type="project" value="TreeGrafter"/>
</dbReference>
<dbReference type="CDD" id="cd04164">
    <property type="entry name" value="trmE"/>
    <property type="match status" value="1"/>
</dbReference>
<dbReference type="CDD" id="cd14858">
    <property type="entry name" value="TrmE_N"/>
    <property type="match status" value="1"/>
</dbReference>
<dbReference type="FunFam" id="3.30.1360.120:FF:000003">
    <property type="entry name" value="tRNA modification GTPase MnmE"/>
    <property type="match status" value="1"/>
</dbReference>
<dbReference type="Gene3D" id="3.40.50.300">
    <property type="entry name" value="P-loop containing nucleotide triphosphate hydrolases"/>
    <property type="match status" value="1"/>
</dbReference>
<dbReference type="Gene3D" id="3.30.1360.120">
    <property type="entry name" value="Probable tRNA modification gtpase trme, domain 1"/>
    <property type="match status" value="1"/>
</dbReference>
<dbReference type="Gene3D" id="1.20.120.430">
    <property type="entry name" value="tRNA modification GTPase MnmE domain 2"/>
    <property type="match status" value="1"/>
</dbReference>
<dbReference type="HAMAP" id="MF_00379">
    <property type="entry name" value="GTPase_MnmE"/>
    <property type="match status" value="1"/>
</dbReference>
<dbReference type="InterPro" id="IPR031168">
    <property type="entry name" value="G_TrmE"/>
</dbReference>
<dbReference type="InterPro" id="IPR006073">
    <property type="entry name" value="GTP-bd"/>
</dbReference>
<dbReference type="InterPro" id="IPR018948">
    <property type="entry name" value="GTP-bd_TrmE_N"/>
</dbReference>
<dbReference type="InterPro" id="IPR004520">
    <property type="entry name" value="GTPase_MnmE"/>
</dbReference>
<dbReference type="InterPro" id="IPR027368">
    <property type="entry name" value="MnmE_dom2"/>
</dbReference>
<dbReference type="InterPro" id="IPR025867">
    <property type="entry name" value="MnmE_helical"/>
</dbReference>
<dbReference type="InterPro" id="IPR027417">
    <property type="entry name" value="P-loop_NTPase"/>
</dbReference>
<dbReference type="InterPro" id="IPR005225">
    <property type="entry name" value="Small_GTP-bd"/>
</dbReference>
<dbReference type="InterPro" id="IPR027266">
    <property type="entry name" value="TrmE/GcvT_dom1"/>
</dbReference>
<dbReference type="NCBIfam" id="TIGR00450">
    <property type="entry name" value="mnmE_trmE_thdF"/>
    <property type="match status" value="1"/>
</dbReference>
<dbReference type="NCBIfam" id="NF003661">
    <property type="entry name" value="PRK05291.1-3"/>
    <property type="match status" value="1"/>
</dbReference>
<dbReference type="NCBIfam" id="TIGR00231">
    <property type="entry name" value="small_GTP"/>
    <property type="match status" value="1"/>
</dbReference>
<dbReference type="PANTHER" id="PTHR42714">
    <property type="entry name" value="TRNA MODIFICATION GTPASE GTPBP3"/>
    <property type="match status" value="1"/>
</dbReference>
<dbReference type="PANTHER" id="PTHR42714:SF2">
    <property type="entry name" value="TRNA MODIFICATION GTPASE GTPBP3, MITOCHONDRIAL"/>
    <property type="match status" value="1"/>
</dbReference>
<dbReference type="Pfam" id="PF01926">
    <property type="entry name" value="MMR_HSR1"/>
    <property type="match status" value="1"/>
</dbReference>
<dbReference type="Pfam" id="PF12631">
    <property type="entry name" value="MnmE_helical"/>
    <property type="match status" value="1"/>
</dbReference>
<dbReference type="Pfam" id="PF10396">
    <property type="entry name" value="TrmE_N"/>
    <property type="match status" value="1"/>
</dbReference>
<dbReference type="SUPFAM" id="SSF52540">
    <property type="entry name" value="P-loop containing nucleoside triphosphate hydrolases"/>
    <property type="match status" value="1"/>
</dbReference>
<dbReference type="SUPFAM" id="SSF116878">
    <property type="entry name" value="TrmE connector domain"/>
    <property type="match status" value="1"/>
</dbReference>
<dbReference type="PROSITE" id="PS51709">
    <property type="entry name" value="G_TRME"/>
    <property type="match status" value="1"/>
</dbReference>
<gene>
    <name evidence="1" type="primary">mnmE</name>
    <name evidence="1" type="synonym">trmE</name>
    <name type="ordered locus">Cpha266_0153</name>
</gene>
<sequence length="475" mass="52220">MQQETGIHPIVQCDPIAAIATPLGVGALAVVRISGATAFDIAGRVFRKARDPHQPLSETPGYTAHFGRLYDGLTLIDEVIALVFRSPSSFTAEDMVEFTCHGGPVVTRHVLQLLLDNGCRLAEPGEFTRRAFLNGKIDLLQAEAIGEMIHARSESAYRTAVIQMKGDLSATLGALREKLLRSCALLELELDFSEEDVEFQSREELRVEIASLQSEVARLVDSYQHGRLLTEGVATVIAGRPNAGKSTLLNTLLGEERAIVSHMPGTTRDYIEECFIHDKTMFRLTDTAGLRETGEEIEHEGVRRSRMKMAEADLLLYLLDLSREGMAEEIKEIVALKAAHASSKFLVVANKIDLVPDATTLLCRLGEEAGCEAIGISARQKLGIDELKSRMSSMVEGLDKLHEASVLVTSLRHYEALRNAGDALRNAQNLLDEQADTELIAFELRAALDYVGEITGKVVNEEILHAIFERFCIGK</sequence>
<name>MNME_CHLPD</name>
<accession>A1BCU6</accession>
<comment type="function">
    <text evidence="1">Exhibits a very high intrinsic GTPase hydrolysis rate. Involved in the addition of a carboxymethylaminomethyl (cmnm) group at the wobble position (U34) of certain tRNAs, forming tRNA-cmnm(5)s(2)U34.</text>
</comment>
<comment type="cofactor">
    <cofactor evidence="1">
        <name>K(+)</name>
        <dbReference type="ChEBI" id="CHEBI:29103"/>
    </cofactor>
    <text evidence="1">Binds 1 potassium ion per subunit.</text>
</comment>
<comment type="subunit">
    <text evidence="1">Homodimer. Heterotetramer of two MnmE and two MnmG subunits.</text>
</comment>
<comment type="subcellular location">
    <subcellularLocation>
        <location evidence="1">Cytoplasm</location>
    </subcellularLocation>
</comment>
<comment type="similarity">
    <text evidence="1">Belongs to the TRAFAC class TrmE-Era-EngA-EngB-Septin-like GTPase superfamily. TrmE GTPase family.</text>
</comment>
<feature type="chain" id="PRO_0000345759" description="tRNA modification GTPase MnmE">
    <location>
        <begin position="1"/>
        <end position="475"/>
    </location>
</feature>
<feature type="domain" description="TrmE-type G">
    <location>
        <begin position="232"/>
        <end position="396"/>
    </location>
</feature>
<feature type="binding site" evidence="1">
    <location>
        <position position="32"/>
    </location>
    <ligand>
        <name>(6S)-5-formyl-5,6,7,8-tetrahydrofolate</name>
        <dbReference type="ChEBI" id="CHEBI:57457"/>
    </ligand>
</feature>
<feature type="binding site" evidence="1">
    <location>
        <position position="97"/>
    </location>
    <ligand>
        <name>(6S)-5-formyl-5,6,7,8-tetrahydrofolate</name>
        <dbReference type="ChEBI" id="CHEBI:57457"/>
    </ligand>
</feature>
<feature type="binding site" evidence="1">
    <location>
        <position position="136"/>
    </location>
    <ligand>
        <name>(6S)-5-formyl-5,6,7,8-tetrahydrofolate</name>
        <dbReference type="ChEBI" id="CHEBI:57457"/>
    </ligand>
</feature>
<feature type="binding site" evidence="1">
    <location>
        <begin position="242"/>
        <end position="247"/>
    </location>
    <ligand>
        <name>GTP</name>
        <dbReference type="ChEBI" id="CHEBI:37565"/>
    </ligand>
</feature>
<feature type="binding site" evidence="1">
    <location>
        <position position="246"/>
    </location>
    <ligand>
        <name>Mg(2+)</name>
        <dbReference type="ChEBI" id="CHEBI:18420"/>
    </ligand>
</feature>
<feature type="binding site" evidence="1">
    <location>
        <begin position="261"/>
        <end position="267"/>
    </location>
    <ligand>
        <name>GTP</name>
        <dbReference type="ChEBI" id="CHEBI:37565"/>
    </ligand>
</feature>
<feature type="binding site" evidence="1">
    <location>
        <position position="267"/>
    </location>
    <ligand>
        <name>Mg(2+)</name>
        <dbReference type="ChEBI" id="CHEBI:18420"/>
    </ligand>
</feature>
<feature type="binding site" evidence="1">
    <location>
        <begin position="286"/>
        <end position="289"/>
    </location>
    <ligand>
        <name>GTP</name>
        <dbReference type="ChEBI" id="CHEBI:37565"/>
    </ligand>
</feature>
<feature type="binding site" evidence="1">
    <location>
        <begin position="377"/>
        <end position="379"/>
    </location>
    <ligand>
        <name>GTP</name>
        <dbReference type="ChEBI" id="CHEBI:37565"/>
    </ligand>
</feature>
<feature type="binding site" evidence="1">
    <location>
        <position position="475"/>
    </location>
    <ligand>
        <name>(6S)-5-formyl-5,6,7,8-tetrahydrofolate</name>
        <dbReference type="ChEBI" id="CHEBI:57457"/>
    </ligand>
</feature>
<protein>
    <recommendedName>
        <fullName evidence="1">tRNA modification GTPase MnmE</fullName>
        <ecNumber evidence="1">3.6.-.-</ecNumber>
    </recommendedName>
</protein>
<reference key="1">
    <citation type="submission" date="2006-12" db="EMBL/GenBank/DDBJ databases">
        <title>Complete sequence of Chlorobium phaeobacteroides DSM 266.</title>
        <authorList>
            <consortium name="US DOE Joint Genome Institute"/>
            <person name="Copeland A."/>
            <person name="Lucas S."/>
            <person name="Lapidus A."/>
            <person name="Barry K."/>
            <person name="Detter J.C."/>
            <person name="Glavina del Rio T."/>
            <person name="Hammon N."/>
            <person name="Israni S."/>
            <person name="Pitluck S."/>
            <person name="Goltsman E."/>
            <person name="Schmutz J."/>
            <person name="Larimer F."/>
            <person name="Land M."/>
            <person name="Hauser L."/>
            <person name="Mikhailova N."/>
            <person name="Li T."/>
            <person name="Overmann J."/>
            <person name="Bryant D.A."/>
            <person name="Richardson P."/>
        </authorList>
    </citation>
    <scope>NUCLEOTIDE SEQUENCE [LARGE SCALE GENOMIC DNA]</scope>
    <source>
        <strain>DSM 266 / SMG 266 / 2430</strain>
    </source>
</reference>
<evidence type="ECO:0000255" key="1">
    <source>
        <dbReference type="HAMAP-Rule" id="MF_00379"/>
    </source>
</evidence>
<keyword id="KW-0963">Cytoplasm</keyword>
<keyword id="KW-0342">GTP-binding</keyword>
<keyword id="KW-0378">Hydrolase</keyword>
<keyword id="KW-0460">Magnesium</keyword>
<keyword id="KW-0479">Metal-binding</keyword>
<keyword id="KW-0547">Nucleotide-binding</keyword>
<keyword id="KW-0630">Potassium</keyword>
<keyword id="KW-1185">Reference proteome</keyword>
<keyword id="KW-0819">tRNA processing</keyword>